<dbReference type="EC" id="2.7.11.1"/>
<dbReference type="EMBL" id="AY030304">
    <property type="protein sequence ID" value="AAK50348.1"/>
    <property type="molecule type" value="mRNA"/>
</dbReference>
<dbReference type="EMBL" id="CP002685">
    <property type="protein sequence ID" value="AEC07656.1"/>
    <property type="molecule type" value="Genomic_DNA"/>
</dbReference>
<dbReference type="EMBL" id="BT029241">
    <property type="protein sequence ID" value="ABJ98573.1"/>
    <property type="molecule type" value="mRNA"/>
</dbReference>
<dbReference type="PIR" id="B84644">
    <property type="entry name" value="B84644"/>
</dbReference>
<dbReference type="RefSeq" id="NP_180081.1">
    <property type="nucleotide sequence ID" value="NM_128066.4"/>
</dbReference>
<dbReference type="SMR" id="Q9SEZ7"/>
<dbReference type="BioGRID" id="2399">
    <property type="interactions" value="15"/>
</dbReference>
<dbReference type="DIP" id="DIP-40199N"/>
<dbReference type="FunCoup" id="Q9SEZ7">
    <property type="interactions" value="961"/>
</dbReference>
<dbReference type="IntAct" id="Q9SEZ7">
    <property type="interactions" value="9"/>
</dbReference>
<dbReference type="STRING" id="3702.Q9SEZ7"/>
<dbReference type="PaxDb" id="3702-AT2G25090.1"/>
<dbReference type="EnsemblPlants" id="AT2G25090.1">
    <property type="protein sequence ID" value="AT2G25090.1"/>
    <property type="gene ID" value="AT2G25090"/>
</dbReference>
<dbReference type="GeneID" id="817047"/>
<dbReference type="Gramene" id="AT2G25090.1">
    <property type="protein sequence ID" value="AT2G25090.1"/>
    <property type="gene ID" value="AT2G25090"/>
</dbReference>
<dbReference type="KEGG" id="ath:AT2G25090"/>
<dbReference type="Araport" id="AT2G25090"/>
<dbReference type="TAIR" id="AT2G25090">
    <property type="gene designation" value="CIPK16"/>
</dbReference>
<dbReference type="eggNOG" id="KOG0583">
    <property type="taxonomic scope" value="Eukaryota"/>
</dbReference>
<dbReference type="HOGENOM" id="CLU_000288_59_0_1"/>
<dbReference type="InParanoid" id="Q9SEZ7"/>
<dbReference type="OMA" id="AREMNMR"/>
<dbReference type="OrthoDB" id="193931at2759"/>
<dbReference type="PhylomeDB" id="Q9SEZ7"/>
<dbReference type="PRO" id="PR:Q9SEZ7"/>
<dbReference type="Proteomes" id="UP000006548">
    <property type="component" value="Chromosome 2"/>
</dbReference>
<dbReference type="ExpressionAtlas" id="Q9SEZ7">
    <property type="expression patterns" value="baseline and differential"/>
</dbReference>
<dbReference type="GO" id="GO:0005524">
    <property type="term" value="F:ATP binding"/>
    <property type="evidence" value="ECO:0007669"/>
    <property type="project" value="UniProtKB-KW"/>
</dbReference>
<dbReference type="GO" id="GO:0106310">
    <property type="term" value="F:protein serine kinase activity"/>
    <property type="evidence" value="ECO:0007669"/>
    <property type="project" value="RHEA"/>
</dbReference>
<dbReference type="GO" id="GO:0004674">
    <property type="term" value="F:protein serine/threonine kinase activity"/>
    <property type="evidence" value="ECO:0007669"/>
    <property type="project" value="UniProtKB-KW"/>
</dbReference>
<dbReference type="GO" id="GO:0042538">
    <property type="term" value="P:hyperosmotic salinity response"/>
    <property type="evidence" value="ECO:0000315"/>
    <property type="project" value="TAIR"/>
</dbReference>
<dbReference type="GO" id="GO:0007165">
    <property type="term" value="P:signal transduction"/>
    <property type="evidence" value="ECO:0007669"/>
    <property type="project" value="InterPro"/>
</dbReference>
<dbReference type="GO" id="GO:0006814">
    <property type="term" value="P:sodium ion transport"/>
    <property type="evidence" value="ECO:0000315"/>
    <property type="project" value="TAIR"/>
</dbReference>
<dbReference type="CDD" id="cd12195">
    <property type="entry name" value="CIPK_C"/>
    <property type="match status" value="1"/>
</dbReference>
<dbReference type="FunFam" id="1.10.510.10:FF:000279">
    <property type="entry name" value="Non-specific serine/threonine protein kinase"/>
    <property type="match status" value="1"/>
</dbReference>
<dbReference type="FunFam" id="3.30.200.20:FF:000096">
    <property type="entry name" value="Non-specific serine/threonine protein kinase"/>
    <property type="match status" value="1"/>
</dbReference>
<dbReference type="FunFam" id="3.30.310.80:FF:000005">
    <property type="entry name" value="Non-specific serine/threonine protein kinase"/>
    <property type="match status" value="1"/>
</dbReference>
<dbReference type="Gene3D" id="3.30.310.80">
    <property type="entry name" value="Kinase associated domain 1, KA1"/>
    <property type="match status" value="1"/>
</dbReference>
<dbReference type="Gene3D" id="3.30.200.20">
    <property type="entry name" value="Phosphorylase Kinase, domain 1"/>
    <property type="match status" value="1"/>
</dbReference>
<dbReference type="Gene3D" id="1.10.510.10">
    <property type="entry name" value="Transferase(Phosphotransferase) domain 1"/>
    <property type="match status" value="1"/>
</dbReference>
<dbReference type="InterPro" id="IPR011009">
    <property type="entry name" value="Kinase-like_dom_sf"/>
</dbReference>
<dbReference type="InterPro" id="IPR018451">
    <property type="entry name" value="NAF/FISL_domain"/>
</dbReference>
<dbReference type="InterPro" id="IPR004041">
    <property type="entry name" value="NAF_dom"/>
</dbReference>
<dbReference type="InterPro" id="IPR000719">
    <property type="entry name" value="Prot_kinase_dom"/>
</dbReference>
<dbReference type="InterPro" id="IPR017441">
    <property type="entry name" value="Protein_kinase_ATP_BS"/>
</dbReference>
<dbReference type="InterPro" id="IPR008271">
    <property type="entry name" value="Ser/Thr_kinase_AS"/>
</dbReference>
<dbReference type="PANTHER" id="PTHR43895">
    <property type="entry name" value="CALCIUM/CALMODULIN-DEPENDENT PROTEIN KINASE KINASE-RELATED"/>
    <property type="match status" value="1"/>
</dbReference>
<dbReference type="PANTHER" id="PTHR43895:SF169">
    <property type="entry name" value="CBL-INTERACTING SERINE_THREONINE-PROTEIN KINASE 16"/>
    <property type="match status" value="1"/>
</dbReference>
<dbReference type="Pfam" id="PF03822">
    <property type="entry name" value="NAF"/>
    <property type="match status" value="1"/>
</dbReference>
<dbReference type="Pfam" id="PF00069">
    <property type="entry name" value="Pkinase"/>
    <property type="match status" value="1"/>
</dbReference>
<dbReference type="SMART" id="SM00220">
    <property type="entry name" value="S_TKc"/>
    <property type="match status" value="1"/>
</dbReference>
<dbReference type="SUPFAM" id="SSF56112">
    <property type="entry name" value="Protein kinase-like (PK-like)"/>
    <property type="match status" value="1"/>
</dbReference>
<dbReference type="PROSITE" id="PS50816">
    <property type="entry name" value="NAF"/>
    <property type="match status" value="1"/>
</dbReference>
<dbReference type="PROSITE" id="PS00107">
    <property type="entry name" value="PROTEIN_KINASE_ATP"/>
    <property type="match status" value="1"/>
</dbReference>
<dbReference type="PROSITE" id="PS50011">
    <property type="entry name" value="PROTEIN_KINASE_DOM"/>
    <property type="match status" value="1"/>
</dbReference>
<dbReference type="PROSITE" id="PS00108">
    <property type="entry name" value="PROTEIN_KINASE_ST"/>
    <property type="match status" value="1"/>
</dbReference>
<proteinExistence type="evidence at protein level"/>
<keyword id="KW-0067">ATP-binding</keyword>
<keyword id="KW-0418">Kinase</keyword>
<keyword id="KW-0464">Manganese</keyword>
<keyword id="KW-0547">Nucleotide-binding</keyword>
<keyword id="KW-0597">Phosphoprotein</keyword>
<keyword id="KW-1185">Reference proteome</keyword>
<keyword id="KW-0723">Serine/threonine-protein kinase</keyword>
<keyword id="KW-0808">Transferase</keyword>
<protein>
    <recommendedName>
        <fullName>CBL-interacting serine/threonine-protein kinase 16</fullName>
        <ecNumber>2.7.11.1</ecNumber>
    </recommendedName>
    <alternativeName>
        <fullName>SNF1-related kinase 3.18</fullName>
    </alternativeName>
    <alternativeName>
        <fullName>SOS2-like protein kinase PKS15</fullName>
    </alternativeName>
</protein>
<comment type="function">
    <text evidence="8">CIPK serine-threonine protein kinases interact with CBL proteins. Binding of a CBL protein to the regulatory NAF domain of CIPK protein lead to the activation of the kinase in a calcium-dependent manner. Downstream of CBL1, CBL2, CBL3 and CBL9, regulates by phosphorylation the K(+) conductance and uptake of AKT1.</text>
</comment>
<comment type="catalytic activity">
    <reaction>
        <text>L-seryl-[protein] + ATP = O-phospho-L-seryl-[protein] + ADP + H(+)</text>
        <dbReference type="Rhea" id="RHEA:17989"/>
        <dbReference type="Rhea" id="RHEA-COMP:9863"/>
        <dbReference type="Rhea" id="RHEA-COMP:11604"/>
        <dbReference type="ChEBI" id="CHEBI:15378"/>
        <dbReference type="ChEBI" id="CHEBI:29999"/>
        <dbReference type="ChEBI" id="CHEBI:30616"/>
        <dbReference type="ChEBI" id="CHEBI:83421"/>
        <dbReference type="ChEBI" id="CHEBI:456216"/>
        <dbReference type="EC" id="2.7.11.1"/>
    </reaction>
</comment>
<comment type="catalytic activity">
    <reaction>
        <text>L-threonyl-[protein] + ATP = O-phospho-L-threonyl-[protein] + ADP + H(+)</text>
        <dbReference type="Rhea" id="RHEA:46608"/>
        <dbReference type="Rhea" id="RHEA-COMP:11060"/>
        <dbReference type="Rhea" id="RHEA-COMP:11605"/>
        <dbReference type="ChEBI" id="CHEBI:15378"/>
        <dbReference type="ChEBI" id="CHEBI:30013"/>
        <dbReference type="ChEBI" id="CHEBI:30616"/>
        <dbReference type="ChEBI" id="CHEBI:61977"/>
        <dbReference type="ChEBI" id="CHEBI:456216"/>
        <dbReference type="EC" id="2.7.11.1"/>
    </reaction>
</comment>
<comment type="cofactor">
    <cofactor evidence="1">
        <name>Mn(2+)</name>
        <dbReference type="ChEBI" id="CHEBI:29035"/>
    </cofactor>
</comment>
<comment type="subunit">
    <text evidence="8">Part of a K(+)-channel calcium-sensing kinase/phosphatase complex composed by a calcium sensor CBL (CBL1, CBL2, CBL3 or CBL9), a kinase CIPK (CIPK6, CIPK16 or CIPK23), a phosphatase PP2C (AIP1) and a K(+)-channel (AKT1). Interacts with AKT1, CBL1, CBL2, CBL3 and CBL9.</text>
</comment>
<comment type="interaction">
    <interactant intactId="EBI-1573415">
        <id>Q9SEZ7</id>
    </interactant>
    <interactant intactId="EBI-4426649">
        <id>Q17TI5</id>
        <label>BRX</label>
    </interactant>
    <organismsDiffer>false</organismsDiffer>
    <experiments>3</experiments>
</comment>
<comment type="interaction">
    <interactant intactId="EBI-1573415">
        <id>Q9SEZ7</id>
    </interactant>
    <interactant intactId="EBI-637381">
        <id>Q9LTB8</id>
        <label>CBL9</label>
    </interactant>
    <organismsDiffer>false</organismsDiffer>
    <experiments>7</experiments>
</comment>
<comment type="interaction">
    <interactant intactId="EBI-1573415">
        <id>Q9SEZ7</id>
    </interactant>
    <interactant intactId="EBI-1238013">
        <id>O22179</id>
        <label>MYB70</label>
    </interactant>
    <organismsDiffer>false</organismsDiffer>
    <experiments>4</experiments>
</comment>
<comment type="interaction">
    <interactant intactId="EBI-1573415">
        <id>Q9SEZ7</id>
    </interactant>
    <interactant intactId="EBI-25506855">
        <id>O23160</id>
        <label>MYB73</label>
    </interactant>
    <organismsDiffer>false</organismsDiffer>
    <experiments>3</experiments>
</comment>
<comment type="interaction">
    <interactant intactId="EBI-1573415">
        <id>Q9SEZ7</id>
    </interactant>
    <interactant intactId="EBI-1645478">
        <id>Q38845</id>
        <label>PP2AA1</label>
    </interactant>
    <organismsDiffer>false</organismsDiffer>
    <experiments>3</experiments>
</comment>
<comment type="domain">
    <text evidence="1">The activation loop within the kinase domain is the target of phosphorylation/activation by upstream protein kinases. The PPI motif mediates the interaction with the ABI (abscisic acid-insensitive) phosphatases (By similarity).</text>
</comment>
<comment type="similarity">
    <text evidence="9">Belongs to the protein kinase superfamily. CAMK Ser/Thr protein kinase family. SNF1 subfamily.</text>
</comment>
<reference key="1">
    <citation type="submission" date="2001-04" db="EMBL/GenBank/DDBJ databases">
        <title>Molecular characterization of the CIPK gene family from Arabidopsis thaliana.</title>
        <authorList>
            <person name="Weinl S."/>
            <person name="Albrecht V."/>
            <person name="Kudla J."/>
        </authorList>
    </citation>
    <scope>NUCLEOTIDE SEQUENCE [MRNA]</scope>
</reference>
<reference key="2">
    <citation type="journal article" date="1999" name="Nature">
        <title>Sequence and analysis of chromosome 2 of the plant Arabidopsis thaliana.</title>
        <authorList>
            <person name="Lin X."/>
            <person name="Kaul S."/>
            <person name="Rounsley S.D."/>
            <person name="Shea T.P."/>
            <person name="Benito M.-I."/>
            <person name="Town C.D."/>
            <person name="Fujii C.Y."/>
            <person name="Mason T.M."/>
            <person name="Bowman C.L."/>
            <person name="Barnstead M.E."/>
            <person name="Feldblyum T.V."/>
            <person name="Buell C.R."/>
            <person name="Ketchum K.A."/>
            <person name="Lee J.J."/>
            <person name="Ronning C.M."/>
            <person name="Koo H.L."/>
            <person name="Moffat K.S."/>
            <person name="Cronin L.A."/>
            <person name="Shen M."/>
            <person name="Pai G."/>
            <person name="Van Aken S."/>
            <person name="Umayam L."/>
            <person name="Tallon L.J."/>
            <person name="Gill J.E."/>
            <person name="Adams M.D."/>
            <person name="Carrera A.J."/>
            <person name="Creasy T.H."/>
            <person name="Goodman H.M."/>
            <person name="Somerville C.R."/>
            <person name="Copenhaver G.P."/>
            <person name="Preuss D."/>
            <person name="Nierman W.C."/>
            <person name="White O."/>
            <person name="Eisen J.A."/>
            <person name="Salzberg S.L."/>
            <person name="Fraser C.M."/>
            <person name="Venter J.C."/>
        </authorList>
    </citation>
    <scope>NUCLEOTIDE SEQUENCE [LARGE SCALE GENOMIC DNA]</scope>
    <source>
        <strain>cv. Columbia</strain>
    </source>
</reference>
<reference key="3">
    <citation type="journal article" date="2017" name="Plant J.">
        <title>Araport11: a complete reannotation of the Arabidopsis thaliana reference genome.</title>
        <authorList>
            <person name="Cheng C.Y."/>
            <person name="Krishnakumar V."/>
            <person name="Chan A.P."/>
            <person name="Thibaud-Nissen F."/>
            <person name="Schobel S."/>
            <person name="Town C.D."/>
        </authorList>
    </citation>
    <scope>GENOME REANNOTATION</scope>
    <source>
        <strain>cv. Columbia</strain>
    </source>
</reference>
<reference key="4">
    <citation type="submission" date="2006-10" db="EMBL/GenBank/DDBJ databases">
        <title>Arabidopsis ORF clones.</title>
        <authorList>
            <person name="Quinitio C."/>
            <person name="Chen H."/>
            <person name="Kim C.J."/>
            <person name="Shinn P."/>
            <person name="Ecker J.R."/>
        </authorList>
    </citation>
    <scope>NUCLEOTIDE SEQUENCE [LARGE SCALE MRNA]</scope>
    <source>
        <strain>cv. Columbia</strain>
    </source>
</reference>
<reference key="5">
    <citation type="journal article" date="2003" name="Plant Physiol.">
        <title>The Arabidopsis CDPK-SnRK superfamily of protein kinases.</title>
        <authorList>
            <person name="Hrabak E.M."/>
            <person name="Chan C.W.M."/>
            <person name="Gribskov M."/>
            <person name="Harper J.F."/>
            <person name="Choi J.H."/>
            <person name="Halford N."/>
            <person name="Kudla J."/>
            <person name="Luan S."/>
            <person name="Nimmo H.G."/>
            <person name="Sussman M.R."/>
            <person name="Thomas M."/>
            <person name="Walker-Simmons K."/>
            <person name="Zhu J.-K."/>
            <person name="Harmon A.C."/>
        </authorList>
    </citation>
    <scope>GENE FAMILY</scope>
    <scope>NOMENCLATURE</scope>
</reference>
<reference key="6">
    <citation type="journal article" date="2007" name="Proc. Natl. Acad. Sci. U.S.A.">
        <title>A protein phosphorylation/dephosphorylation network regulates a plant potassium channel.</title>
        <authorList>
            <person name="Lee S.-C."/>
            <person name="Lan W.-Z."/>
            <person name="Kim B.-G."/>
            <person name="Li L."/>
            <person name="Cheong Y.H."/>
            <person name="Pandey G.K."/>
            <person name="Lu G."/>
            <person name="Buchanan B.B."/>
            <person name="Luan S."/>
        </authorList>
    </citation>
    <scope>FUNCTION</scope>
    <scope>INTERACTION WITH AKT1; CBL1; CBL2; CBL3 AND CBL9</scope>
</reference>
<sequence length="469" mass="53551">MEESNRSSTVLFDKYNIGRLLGTGNFAKVYHGTEISTGDDVAIKVIKKDHVFKRRGMMEQIEREIAVMRLLRHPNVVELREVMATKKKIFFVMEYVNGGELFEMIDRDGKLPEDLARKYFQQLISAVDFCHSRGVFHRDIKPENLLLDGEGDLKVTDFGLSALMMPEGLGGRRGSSDDLLHTRCGTPAYVAPEVLRNKGYDGAMADIWSCGIVLYALLAGFLPFIDENVMTLYTKIFKAECEFPPWFSLESKELLSRLLVPDPEQRISMSEIKMIPWFRKNFTPSVAFSIDETIPSPPEPPTKKKKKDLNEKEDDGASPRSFNAFQFITSMSSGFDLSNLFEIKRKPKRMFTSKFPAKSVKERLETAAREMDMRVKHVKDCKMKLQRRTEGRKGRLSVTAEVFEVAPEVSVVEFCKTSGDTLEYYLFCEDDVRPALKDIVWSWQGDDDEDDVTTNDNVDTNDNKINNVS</sequence>
<accession>Q9SEZ7</accession>
<gene>
    <name type="primary">CIPK16</name>
    <name type="synonym">PKS15</name>
    <name type="synonym">SnRK3.18</name>
    <name type="ordered locus">At2g25090</name>
    <name type="ORF">F13D4.161</name>
</gene>
<feature type="chain" id="PRO_0000337217" description="CBL-interacting serine/threonine-protein kinase 16">
    <location>
        <begin position="1"/>
        <end position="469"/>
    </location>
</feature>
<feature type="domain" description="Protein kinase" evidence="4">
    <location>
        <begin position="15"/>
        <end position="278"/>
    </location>
</feature>
<feature type="domain" description="NAF" evidence="5">
    <location>
        <begin position="317"/>
        <end position="342"/>
    </location>
</feature>
<feature type="region of interest" description="Activation loop" evidence="1">
    <location>
        <begin position="157"/>
        <end position="193"/>
    </location>
</feature>
<feature type="region of interest" description="Disordered" evidence="7">
    <location>
        <begin position="290"/>
        <end position="320"/>
    </location>
</feature>
<feature type="region of interest" description="PPI" evidence="1">
    <location>
        <begin position="346"/>
        <end position="376"/>
    </location>
</feature>
<feature type="region of interest" description="Disordered" evidence="7">
    <location>
        <begin position="447"/>
        <end position="469"/>
    </location>
</feature>
<feature type="compositionally biased region" description="Low complexity" evidence="7">
    <location>
        <begin position="454"/>
        <end position="469"/>
    </location>
</feature>
<feature type="active site" description="Proton acceptor" evidence="4 6">
    <location>
        <position position="139"/>
    </location>
</feature>
<feature type="binding site" evidence="4">
    <location>
        <begin position="21"/>
        <end position="29"/>
    </location>
    <ligand>
        <name>ATP</name>
        <dbReference type="ChEBI" id="CHEBI:30616"/>
    </ligand>
</feature>
<feature type="binding site" evidence="4">
    <location>
        <position position="44"/>
    </location>
    <ligand>
        <name>ATP</name>
        <dbReference type="ChEBI" id="CHEBI:30616"/>
    </ligand>
</feature>
<feature type="modified residue" description="Phosphoserine" evidence="3">
    <location>
        <position position="161"/>
    </location>
</feature>
<feature type="modified residue" description="Phosphothreonine" evidence="2">
    <location>
        <position position="182"/>
    </location>
</feature>
<organism>
    <name type="scientific">Arabidopsis thaliana</name>
    <name type="common">Mouse-ear cress</name>
    <dbReference type="NCBI Taxonomy" id="3702"/>
    <lineage>
        <taxon>Eukaryota</taxon>
        <taxon>Viridiplantae</taxon>
        <taxon>Streptophyta</taxon>
        <taxon>Embryophyta</taxon>
        <taxon>Tracheophyta</taxon>
        <taxon>Spermatophyta</taxon>
        <taxon>Magnoliopsida</taxon>
        <taxon>eudicotyledons</taxon>
        <taxon>Gunneridae</taxon>
        <taxon>Pentapetalae</taxon>
        <taxon>rosids</taxon>
        <taxon>malvids</taxon>
        <taxon>Brassicales</taxon>
        <taxon>Brassicaceae</taxon>
        <taxon>Camelineae</taxon>
        <taxon>Arabidopsis</taxon>
    </lineage>
</organism>
<name>CIPKG_ARATH</name>
<evidence type="ECO:0000250" key="1"/>
<evidence type="ECO:0000250" key="2">
    <source>
        <dbReference type="UniProtKB" id="Q38997"/>
    </source>
</evidence>
<evidence type="ECO:0000250" key="3">
    <source>
        <dbReference type="UniProtKB" id="Q93V58"/>
    </source>
</evidence>
<evidence type="ECO:0000255" key="4">
    <source>
        <dbReference type="PROSITE-ProRule" id="PRU00159"/>
    </source>
</evidence>
<evidence type="ECO:0000255" key="5">
    <source>
        <dbReference type="PROSITE-ProRule" id="PRU00256"/>
    </source>
</evidence>
<evidence type="ECO:0000255" key="6">
    <source>
        <dbReference type="PROSITE-ProRule" id="PRU10027"/>
    </source>
</evidence>
<evidence type="ECO:0000256" key="7">
    <source>
        <dbReference type="SAM" id="MobiDB-lite"/>
    </source>
</evidence>
<evidence type="ECO:0000269" key="8">
    <source>
    </source>
</evidence>
<evidence type="ECO:0000305" key="9"/>